<protein>
    <recommendedName>
        <fullName>Uncharacterized transmembrane protein DDB_G0281147</fullName>
    </recommendedName>
</protein>
<organism>
    <name type="scientific">Dictyostelium discoideum</name>
    <name type="common">Social amoeba</name>
    <dbReference type="NCBI Taxonomy" id="44689"/>
    <lineage>
        <taxon>Eukaryota</taxon>
        <taxon>Amoebozoa</taxon>
        <taxon>Evosea</taxon>
        <taxon>Eumycetozoa</taxon>
        <taxon>Dictyostelia</taxon>
        <taxon>Dictyosteliales</taxon>
        <taxon>Dictyosteliaceae</taxon>
        <taxon>Dictyostelium</taxon>
    </lineage>
</organism>
<dbReference type="EMBL" id="AAFI02000040">
    <property type="protein sequence ID" value="EAL66870.1"/>
    <property type="molecule type" value="Genomic_DNA"/>
</dbReference>
<dbReference type="RefSeq" id="XP_640843.1">
    <property type="nucleotide sequence ID" value="XM_635751.1"/>
</dbReference>
<dbReference type="SMR" id="Q54UD3"/>
<dbReference type="FunCoup" id="Q54UD3">
    <property type="interactions" value="877"/>
</dbReference>
<dbReference type="PaxDb" id="44689-DDB0204041"/>
<dbReference type="EnsemblProtists" id="EAL66870">
    <property type="protein sequence ID" value="EAL66870"/>
    <property type="gene ID" value="DDB_G0281147"/>
</dbReference>
<dbReference type="GeneID" id="8622899"/>
<dbReference type="KEGG" id="ddi:DDB_G0281147"/>
<dbReference type="dictyBase" id="DDB_G0281147"/>
<dbReference type="VEuPathDB" id="AmoebaDB:DDB_G0281147"/>
<dbReference type="eggNOG" id="ENOG502RBFP">
    <property type="taxonomic scope" value="Eukaryota"/>
</dbReference>
<dbReference type="HOGENOM" id="CLU_2065884_0_0_1"/>
<dbReference type="InParanoid" id="Q54UD3"/>
<dbReference type="PRO" id="PR:Q54UD3"/>
<dbReference type="Proteomes" id="UP000002195">
    <property type="component" value="Chromosome 3"/>
</dbReference>
<dbReference type="GO" id="GO:0016020">
    <property type="term" value="C:membrane"/>
    <property type="evidence" value="ECO:0007669"/>
    <property type="project" value="UniProtKB-SubCell"/>
</dbReference>
<dbReference type="PANTHER" id="PTHR34078:SF2">
    <property type="entry name" value="DUF4190 DOMAIN-CONTAINING PROTEIN"/>
    <property type="match status" value="1"/>
</dbReference>
<dbReference type="PANTHER" id="PTHR34078">
    <property type="entry name" value="EXPRESSED PROTEIN"/>
    <property type="match status" value="1"/>
</dbReference>
<reference key="1">
    <citation type="journal article" date="2005" name="Nature">
        <title>The genome of the social amoeba Dictyostelium discoideum.</title>
        <authorList>
            <person name="Eichinger L."/>
            <person name="Pachebat J.A."/>
            <person name="Gloeckner G."/>
            <person name="Rajandream M.A."/>
            <person name="Sucgang R."/>
            <person name="Berriman M."/>
            <person name="Song J."/>
            <person name="Olsen R."/>
            <person name="Szafranski K."/>
            <person name="Xu Q."/>
            <person name="Tunggal B."/>
            <person name="Kummerfeld S."/>
            <person name="Madera M."/>
            <person name="Konfortov B.A."/>
            <person name="Rivero F."/>
            <person name="Bankier A.T."/>
            <person name="Lehmann R."/>
            <person name="Hamlin N."/>
            <person name="Davies R."/>
            <person name="Gaudet P."/>
            <person name="Fey P."/>
            <person name="Pilcher K."/>
            <person name="Chen G."/>
            <person name="Saunders D."/>
            <person name="Sodergren E.J."/>
            <person name="Davis P."/>
            <person name="Kerhornou A."/>
            <person name="Nie X."/>
            <person name="Hall N."/>
            <person name="Anjard C."/>
            <person name="Hemphill L."/>
            <person name="Bason N."/>
            <person name="Farbrother P."/>
            <person name="Desany B."/>
            <person name="Just E."/>
            <person name="Morio T."/>
            <person name="Rost R."/>
            <person name="Churcher C.M."/>
            <person name="Cooper J."/>
            <person name="Haydock S."/>
            <person name="van Driessche N."/>
            <person name="Cronin A."/>
            <person name="Goodhead I."/>
            <person name="Muzny D.M."/>
            <person name="Mourier T."/>
            <person name="Pain A."/>
            <person name="Lu M."/>
            <person name="Harper D."/>
            <person name="Lindsay R."/>
            <person name="Hauser H."/>
            <person name="James K.D."/>
            <person name="Quiles M."/>
            <person name="Madan Babu M."/>
            <person name="Saito T."/>
            <person name="Buchrieser C."/>
            <person name="Wardroper A."/>
            <person name="Felder M."/>
            <person name="Thangavelu M."/>
            <person name="Johnson D."/>
            <person name="Knights A."/>
            <person name="Loulseged H."/>
            <person name="Mungall K.L."/>
            <person name="Oliver K."/>
            <person name="Price C."/>
            <person name="Quail M.A."/>
            <person name="Urushihara H."/>
            <person name="Hernandez J."/>
            <person name="Rabbinowitsch E."/>
            <person name="Steffen D."/>
            <person name="Sanders M."/>
            <person name="Ma J."/>
            <person name="Kohara Y."/>
            <person name="Sharp S."/>
            <person name="Simmonds M.N."/>
            <person name="Spiegler S."/>
            <person name="Tivey A."/>
            <person name="Sugano S."/>
            <person name="White B."/>
            <person name="Walker D."/>
            <person name="Woodward J.R."/>
            <person name="Winckler T."/>
            <person name="Tanaka Y."/>
            <person name="Shaulsky G."/>
            <person name="Schleicher M."/>
            <person name="Weinstock G.M."/>
            <person name="Rosenthal A."/>
            <person name="Cox E.C."/>
            <person name="Chisholm R.L."/>
            <person name="Gibbs R.A."/>
            <person name="Loomis W.F."/>
            <person name="Platzer M."/>
            <person name="Kay R.R."/>
            <person name="Williams J.G."/>
            <person name="Dear P.H."/>
            <person name="Noegel A.A."/>
            <person name="Barrell B.G."/>
            <person name="Kuspa A."/>
        </authorList>
    </citation>
    <scope>NUCLEOTIDE SEQUENCE [LARGE SCALE GENOMIC DNA]</scope>
    <source>
        <strain>AX4</strain>
    </source>
</reference>
<name>Y4041_DICDI</name>
<comment type="subcellular location">
    <subcellularLocation>
        <location evidence="2">Membrane</location>
        <topology evidence="2">Multi-pass membrane protein</topology>
    </subcellularLocation>
</comment>
<proteinExistence type="predicted"/>
<gene>
    <name type="ORF">DDB_G0281147</name>
</gene>
<sequence>MTLDDIENNNNDHGQFMPMYDEGVNFPSYSNNFQPLKIEKNDKEDRQVTCSIVLFVLGFLLLIPWIINVINIKSKNKMARGFSIASVVLFSLSIAIIVIFVIFFIFLITSLHNSHREDR</sequence>
<accession>Q54UD3</accession>
<evidence type="ECO:0000255" key="1"/>
<evidence type="ECO:0000305" key="2"/>
<keyword id="KW-0472">Membrane</keyword>
<keyword id="KW-1185">Reference proteome</keyword>
<keyword id="KW-0812">Transmembrane</keyword>
<keyword id="KW-1133">Transmembrane helix</keyword>
<feature type="chain" id="PRO_0000352404" description="Uncharacterized transmembrane protein DDB_G0281147">
    <location>
        <begin position="1"/>
        <end position="119"/>
    </location>
</feature>
<feature type="transmembrane region" description="Helical" evidence="1">
    <location>
        <begin position="52"/>
        <end position="72"/>
    </location>
</feature>
<feature type="transmembrane region" description="Helical" evidence="1">
    <location>
        <begin position="88"/>
        <end position="108"/>
    </location>
</feature>